<reference key="1">
    <citation type="submission" date="2006-12" db="EMBL/GenBank/DDBJ databases">
        <authorList>
            <person name="Hendrix L."/>
            <person name="Mohamoud Y."/>
            <person name="Radune D."/>
            <person name="Shvartsbeyn A."/>
            <person name="Daugherty S."/>
            <person name="Dodson R."/>
            <person name="Durkin A.S."/>
            <person name="Harkins D."/>
            <person name="Huot H."/>
            <person name="Kothari S.P."/>
            <person name="Madupu R."/>
            <person name="Li J."/>
            <person name="Nelson W.C."/>
            <person name="Shrivastava S."/>
            <person name="Giglio M.G."/>
            <person name="Haft D."/>
            <person name="Selengut J."/>
            <person name="Fraser-Ligget C."/>
            <person name="Seshadri R."/>
        </authorList>
    </citation>
    <scope>NUCLEOTIDE SEQUENCE [LARGE SCALE GENOMIC DNA]</scope>
    <source>
        <strain>ATCC 35685 / KC583 / Herrer 020/F12,63</strain>
    </source>
</reference>
<name>COXX_BARBK</name>
<accession>A1URX1</accession>
<evidence type="ECO:0000255" key="1">
    <source>
        <dbReference type="HAMAP-Rule" id="MF_00154"/>
    </source>
</evidence>
<gene>
    <name evidence="1" type="primary">ctaB</name>
    <name type="ordered locus">BARBAKC583_0405</name>
</gene>
<proteinExistence type="inferred from homology"/>
<organism>
    <name type="scientific">Bartonella bacilliformis (strain ATCC 35685 / KC583 / Herrer 020/F12,63)</name>
    <dbReference type="NCBI Taxonomy" id="360095"/>
    <lineage>
        <taxon>Bacteria</taxon>
        <taxon>Pseudomonadati</taxon>
        <taxon>Pseudomonadota</taxon>
        <taxon>Alphaproteobacteria</taxon>
        <taxon>Hyphomicrobiales</taxon>
        <taxon>Bartonellaceae</taxon>
        <taxon>Bartonella</taxon>
    </lineage>
</organism>
<dbReference type="EC" id="2.5.1.141" evidence="1"/>
<dbReference type="EMBL" id="CP000524">
    <property type="protein sequence ID" value="ABM44828.1"/>
    <property type="molecule type" value="Genomic_DNA"/>
</dbReference>
<dbReference type="SMR" id="A1URX1"/>
<dbReference type="STRING" id="360095.BARBAKC583_0405"/>
<dbReference type="GeneID" id="4685162"/>
<dbReference type="KEGG" id="bbk:BARBAKC583_0405"/>
<dbReference type="PATRIC" id="fig|360095.6.peg.388"/>
<dbReference type="eggNOG" id="COG0109">
    <property type="taxonomic scope" value="Bacteria"/>
</dbReference>
<dbReference type="HOGENOM" id="CLU_029631_0_2_5"/>
<dbReference type="OrthoDB" id="9814417at2"/>
<dbReference type="UniPathway" id="UPA00834">
    <property type="reaction ID" value="UER00712"/>
</dbReference>
<dbReference type="Proteomes" id="UP000000643">
    <property type="component" value="Chromosome"/>
</dbReference>
<dbReference type="GO" id="GO:0005886">
    <property type="term" value="C:plasma membrane"/>
    <property type="evidence" value="ECO:0007669"/>
    <property type="project" value="UniProtKB-SubCell"/>
</dbReference>
<dbReference type="GO" id="GO:0008495">
    <property type="term" value="F:protoheme IX farnesyltransferase activity"/>
    <property type="evidence" value="ECO:0007669"/>
    <property type="project" value="UniProtKB-UniRule"/>
</dbReference>
<dbReference type="GO" id="GO:0048034">
    <property type="term" value="P:heme O biosynthetic process"/>
    <property type="evidence" value="ECO:0007669"/>
    <property type="project" value="UniProtKB-UniRule"/>
</dbReference>
<dbReference type="CDD" id="cd13957">
    <property type="entry name" value="PT_UbiA_Cox10"/>
    <property type="match status" value="1"/>
</dbReference>
<dbReference type="Gene3D" id="1.10.357.140">
    <property type="entry name" value="UbiA prenyltransferase"/>
    <property type="match status" value="1"/>
</dbReference>
<dbReference type="HAMAP" id="MF_00154">
    <property type="entry name" value="CyoE_CtaB"/>
    <property type="match status" value="1"/>
</dbReference>
<dbReference type="InterPro" id="IPR006369">
    <property type="entry name" value="Protohaem_IX_farnesylTrfase"/>
</dbReference>
<dbReference type="InterPro" id="IPR000537">
    <property type="entry name" value="UbiA_prenyltransferase"/>
</dbReference>
<dbReference type="InterPro" id="IPR030470">
    <property type="entry name" value="UbiA_prenylTrfase_CS"/>
</dbReference>
<dbReference type="InterPro" id="IPR044878">
    <property type="entry name" value="UbiA_sf"/>
</dbReference>
<dbReference type="NCBIfam" id="TIGR01473">
    <property type="entry name" value="cyoE_ctaB"/>
    <property type="match status" value="1"/>
</dbReference>
<dbReference type="NCBIfam" id="NF003349">
    <property type="entry name" value="PRK04375.1-2"/>
    <property type="match status" value="1"/>
</dbReference>
<dbReference type="PANTHER" id="PTHR43448:SF7">
    <property type="entry name" value="4-HYDROXYBENZOATE SOLANESYLTRANSFERASE"/>
    <property type="match status" value="1"/>
</dbReference>
<dbReference type="PANTHER" id="PTHR43448">
    <property type="entry name" value="PROTOHEME IX FARNESYLTRANSFERASE, MITOCHONDRIAL"/>
    <property type="match status" value="1"/>
</dbReference>
<dbReference type="Pfam" id="PF01040">
    <property type="entry name" value="UbiA"/>
    <property type="match status" value="1"/>
</dbReference>
<dbReference type="PROSITE" id="PS00943">
    <property type="entry name" value="UBIA"/>
    <property type="match status" value="1"/>
</dbReference>
<sequence length="311" mass="34330">MSISGKLLTEDNQLISPVATVYDYIALLKPRVMSLVVFTALVGLVVSPVVVDPLYGFVAILCIAIGGGGAGALNMWYEADIDALMKRTQKRPIPSGKISRGKALIFSSILSVLSVFLMGVLINWFSALFLAFTIFFYIVIYTIWLKRITPQNIVIGGAAGAFPPMIGWAAATGTISLDSFLLFLIIFMWTPPHFWSLCLFSSSDYEAAGIPMMPNVRGERSTKNQILVYAIITAVCAIGPYITGYAGIIYGISSTILGGMFVYFAYRLWKTDTHDETVPIAKKTFFFSLFYLGAIFGILLIEFLIWHFIIR</sequence>
<comment type="function">
    <text evidence="1">Converts heme B (protoheme IX) to heme O by substitution of the vinyl group on carbon 2 of heme B porphyrin ring with a hydroxyethyl farnesyl side group.</text>
</comment>
<comment type="catalytic activity">
    <reaction evidence="1">
        <text>heme b + (2E,6E)-farnesyl diphosphate + H2O = Fe(II)-heme o + diphosphate</text>
        <dbReference type="Rhea" id="RHEA:28070"/>
        <dbReference type="ChEBI" id="CHEBI:15377"/>
        <dbReference type="ChEBI" id="CHEBI:33019"/>
        <dbReference type="ChEBI" id="CHEBI:60344"/>
        <dbReference type="ChEBI" id="CHEBI:60530"/>
        <dbReference type="ChEBI" id="CHEBI:175763"/>
        <dbReference type="EC" id="2.5.1.141"/>
    </reaction>
</comment>
<comment type="pathway">
    <text evidence="1">Porphyrin-containing compound metabolism; heme O biosynthesis; heme O from protoheme: step 1/1.</text>
</comment>
<comment type="subcellular location">
    <subcellularLocation>
        <location evidence="1">Cell inner membrane</location>
        <topology evidence="1">Multi-pass membrane protein</topology>
    </subcellularLocation>
</comment>
<comment type="miscellaneous">
    <text evidence="1">Carbon 2 of the heme B porphyrin ring is defined according to the Fischer nomenclature.</text>
</comment>
<comment type="similarity">
    <text evidence="1">Belongs to the UbiA prenyltransferase family. Protoheme IX farnesyltransferase subfamily.</text>
</comment>
<feature type="chain" id="PRO_0000327010" description="Protoheme IX farnesyltransferase">
    <location>
        <begin position="1"/>
        <end position="311"/>
    </location>
</feature>
<feature type="transmembrane region" description="Helical" evidence="1">
    <location>
        <begin position="32"/>
        <end position="52"/>
    </location>
</feature>
<feature type="transmembrane region" description="Helical" evidence="1">
    <location>
        <begin position="53"/>
        <end position="73"/>
    </location>
</feature>
<feature type="transmembrane region" description="Helical" evidence="1">
    <location>
        <begin position="98"/>
        <end position="118"/>
    </location>
</feature>
<feature type="transmembrane region" description="Helical" evidence="1">
    <location>
        <begin position="120"/>
        <end position="140"/>
    </location>
</feature>
<feature type="transmembrane region" description="Helical" evidence="1">
    <location>
        <begin position="153"/>
        <end position="173"/>
    </location>
</feature>
<feature type="transmembrane region" description="Helical" evidence="1">
    <location>
        <begin position="180"/>
        <end position="200"/>
    </location>
</feature>
<feature type="transmembrane region" description="Helical" evidence="1">
    <location>
        <begin position="226"/>
        <end position="246"/>
    </location>
</feature>
<feature type="transmembrane region" description="Helical" evidence="1">
    <location>
        <begin position="248"/>
        <end position="268"/>
    </location>
</feature>
<feature type="transmembrane region" description="Helical" evidence="1">
    <location>
        <begin position="285"/>
        <end position="305"/>
    </location>
</feature>
<protein>
    <recommendedName>
        <fullName evidence="1">Protoheme IX farnesyltransferase</fullName>
        <ecNumber evidence="1">2.5.1.141</ecNumber>
    </recommendedName>
    <alternativeName>
        <fullName evidence="1">Heme B farnesyltransferase</fullName>
    </alternativeName>
    <alternativeName>
        <fullName evidence="1">Heme O synthase</fullName>
    </alternativeName>
</protein>
<keyword id="KW-0997">Cell inner membrane</keyword>
<keyword id="KW-1003">Cell membrane</keyword>
<keyword id="KW-0350">Heme biosynthesis</keyword>
<keyword id="KW-0472">Membrane</keyword>
<keyword id="KW-0808">Transferase</keyword>
<keyword id="KW-0812">Transmembrane</keyword>
<keyword id="KW-1133">Transmembrane helix</keyword>